<name>GOG8I_HUMAN</name>
<feature type="chain" id="PRO_0000328760" description="Putative golgin subfamily A member 8I">
    <location>
        <begin position="1"/>
        <end position="632"/>
    </location>
</feature>
<feature type="region of interest" description="Disordered" evidence="3">
    <location>
        <begin position="1"/>
        <end position="77"/>
    </location>
</feature>
<feature type="region of interest" description="Disordered" evidence="3">
    <location>
        <begin position="352"/>
        <end position="383"/>
    </location>
</feature>
<feature type="region of interest" description="Disordered" evidence="3">
    <location>
        <begin position="423"/>
        <end position="445"/>
    </location>
</feature>
<feature type="region of interest" description="Disordered" evidence="3">
    <location>
        <begin position="496"/>
        <end position="524"/>
    </location>
</feature>
<feature type="region of interest" description="Golgi-targeting domain" evidence="1">
    <location>
        <begin position="529"/>
        <end position="632"/>
    </location>
</feature>
<feature type="region of interest" description="Disordered" evidence="3">
    <location>
        <begin position="550"/>
        <end position="569"/>
    </location>
</feature>
<feature type="coiled-coil region" evidence="2">
    <location>
        <begin position="86"/>
        <end position="154"/>
    </location>
</feature>
<feature type="coiled-coil region" evidence="2">
    <location>
        <begin position="209"/>
        <end position="421"/>
    </location>
</feature>
<feature type="compositionally biased region" description="Polar residues" evidence="3">
    <location>
        <begin position="38"/>
        <end position="50"/>
    </location>
</feature>
<feature type="compositionally biased region" description="Basic and acidic residues" evidence="3">
    <location>
        <begin position="352"/>
        <end position="362"/>
    </location>
</feature>
<feature type="compositionally biased region" description="Gly residues" evidence="3">
    <location>
        <begin position="508"/>
        <end position="520"/>
    </location>
</feature>
<feature type="compositionally biased region" description="Low complexity" evidence="3">
    <location>
        <begin position="555"/>
        <end position="568"/>
    </location>
</feature>
<gene>
    <name evidence="5" type="primary">GOLGA8IP</name>
    <name evidence="5" type="synonym">GOLGA8I</name>
    <name evidence="5" type="synonym">GOLGA9P</name>
</gene>
<organism>
    <name type="scientific">Homo sapiens</name>
    <name type="common">Human</name>
    <dbReference type="NCBI Taxonomy" id="9606"/>
    <lineage>
        <taxon>Eukaryota</taxon>
        <taxon>Metazoa</taxon>
        <taxon>Chordata</taxon>
        <taxon>Craniata</taxon>
        <taxon>Vertebrata</taxon>
        <taxon>Euteleostomi</taxon>
        <taxon>Mammalia</taxon>
        <taxon>Eutheria</taxon>
        <taxon>Euarchontoglires</taxon>
        <taxon>Primates</taxon>
        <taxon>Haplorrhini</taxon>
        <taxon>Catarrhini</taxon>
        <taxon>Hominidae</taxon>
        <taxon>Homo</taxon>
    </lineage>
</organism>
<evidence type="ECO:0000250" key="1"/>
<evidence type="ECO:0000255" key="2"/>
<evidence type="ECO:0000256" key="3">
    <source>
        <dbReference type="SAM" id="MobiDB-lite"/>
    </source>
</evidence>
<evidence type="ECO:0000305" key="4"/>
<evidence type="ECO:0000312" key="5">
    <source>
        <dbReference type="HGNC" id="HGNC:26660"/>
    </source>
</evidence>
<sequence>MAEETQHNKLAAAKKKLKEYWQKNSPRVPAGANRNRKTNGSIPQTATSGGCQPPGDSATGFHREGPTSSATLKDLESPCQERAVVLDSRSVEISQLKNTIKSLKQQKKQVEHQLEEEKKANIKKQKAKRVLEVQIQTLNIQKEELNTDLYHMKRSLRYFEEKSKDLAVRLQHSLQRKGELESVLSDVMATQKKKANQLSSPSKAGTEWKLEQSMREEALLKVQLTQLKESFQQLQLERHEYAEHLKGERARWQQRMRKMSQEICTLKKEKQQDMRRVEKLERSLSKLKNQMAEPLPPEPPAVPSEVELQHLRKELERVAGALQAQVKNNQRISLLNRGQEERIREQEERLRKQEERIQEQHKSLQQLAKPQSVFEEPNNENKSALQLEQQVKELQEKLGEEHLEAASQQNQQLTAQLSLMALPGEGHGGEHLDSEGEEAPQPMPSVPEDLESREAMSSFMDHLEEKADLSELVKKKELCFIHHWRERCHQKTHHLLSEPGGRAKDAALGGGHHQAGAQGGDEGEAAGAAADGIAAYSNYNNGHRKFLAAAHNPADEPGPGAPAPQELGAADKHGDLCEVSLTSSAQGEAREDPLLDKPTAQPIVQDHQEHPGLGSNCCVPFFCWAWLPRRRR</sequence>
<accession>A6NC78</accession>
<comment type="function">
    <text evidence="1">May be involved in maintaining Golgi structure.</text>
</comment>
<comment type="subcellular location">
    <subcellularLocation>
        <location evidence="1">Golgi apparatus</location>
        <location evidence="1">Golgi stack membrane</location>
        <topology evidence="1">Peripheral membrane protein</topology>
    </subcellularLocation>
</comment>
<comment type="similarity">
    <text evidence="4">Belongs to the GOLGA8 family.</text>
</comment>
<comment type="caution">
    <text evidence="4">Could be the product of a pseudogene.</text>
</comment>
<keyword id="KW-0175">Coiled coil</keyword>
<keyword id="KW-0333">Golgi apparatus</keyword>
<keyword id="KW-0472">Membrane</keyword>
<keyword id="KW-1185">Reference proteome</keyword>
<dbReference type="EMBL" id="AC091565">
    <property type="status" value="NOT_ANNOTATED_CDS"/>
    <property type="molecule type" value="Genomic_DNA"/>
</dbReference>
<dbReference type="SMR" id="A6NC78"/>
<dbReference type="FunCoup" id="A6NC78">
    <property type="interactions" value="57"/>
</dbReference>
<dbReference type="GlyGen" id="A6NC78">
    <property type="glycosylation" value="1 site"/>
</dbReference>
<dbReference type="iPTMnet" id="A6NC78"/>
<dbReference type="PhosphoSitePlus" id="A6NC78"/>
<dbReference type="BioMuta" id="HGNC:26660"/>
<dbReference type="jPOST" id="A6NC78"/>
<dbReference type="MassIVE" id="A6NC78"/>
<dbReference type="ProteomicsDB" id="807"/>
<dbReference type="AGR" id="HGNC:26660"/>
<dbReference type="GeneCards" id="GOLGA8IP"/>
<dbReference type="HGNC" id="HGNC:26660">
    <property type="gene designation" value="GOLGA8IP"/>
</dbReference>
<dbReference type="neXtProt" id="NX_A6NC78"/>
<dbReference type="InParanoid" id="A6NC78"/>
<dbReference type="PAN-GO" id="A6NC78">
    <property type="GO annotations" value="4 GO annotations based on evolutionary models"/>
</dbReference>
<dbReference type="PhylomeDB" id="A6NC78"/>
<dbReference type="TreeFam" id="TF316990"/>
<dbReference type="PathwayCommons" id="A6NC78"/>
<dbReference type="Pharos" id="A6NC78">
    <property type="development level" value="Tdark"/>
</dbReference>
<dbReference type="Proteomes" id="UP000005640">
    <property type="component" value="Unplaced"/>
</dbReference>
<dbReference type="RNAct" id="A6NC78">
    <property type="molecule type" value="protein"/>
</dbReference>
<dbReference type="GO" id="GO:0005801">
    <property type="term" value="C:cis-Golgi network"/>
    <property type="evidence" value="ECO:0000318"/>
    <property type="project" value="GO_Central"/>
</dbReference>
<dbReference type="GO" id="GO:0000137">
    <property type="term" value="C:Golgi cis cisterna"/>
    <property type="evidence" value="ECO:0000318"/>
    <property type="project" value="GO_Central"/>
</dbReference>
<dbReference type="GO" id="GO:0032580">
    <property type="term" value="C:Golgi cisterna membrane"/>
    <property type="evidence" value="ECO:0000318"/>
    <property type="project" value="GO_Central"/>
</dbReference>
<dbReference type="GO" id="GO:0007030">
    <property type="term" value="P:Golgi organization"/>
    <property type="evidence" value="ECO:0000318"/>
    <property type="project" value="GO_Central"/>
</dbReference>
<dbReference type="InterPro" id="IPR043937">
    <property type="entry name" value="GM130_C"/>
</dbReference>
<dbReference type="InterPro" id="IPR043976">
    <property type="entry name" value="GOLGA_cons_dom"/>
</dbReference>
<dbReference type="InterPro" id="IPR024858">
    <property type="entry name" value="Golgin_A"/>
</dbReference>
<dbReference type="PANTHER" id="PTHR10881:SF62">
    <property type="entry name" value="GOLGIN SUBFAMILY A MEMBER 8H-RELATED"/>
    <property type="match status" value="1"/>
</dbReference>
<dbReference type="PANTHER" id="PTHR10881">
    <property type="entry name" value="GOLGIN SUBFAMILY A MEMBER-RELATED"/>
    <property type="match status" value="1"/>
</dbReference>
<dbReference type="Pfam" id="PF19046">
    <property type="entry name" value="GM130_C"/>
    <property type="match status" value="1"/>
</dbReference>
<dbReference type="Pfam" id="PF15070">
    <property type="entry name" value="GOLGA2L5"/>
    <property type="match status" value="2"/>
</dbReference>
<reference key="1">
    <citation type="journal article" date="2006" name="Nature">
        <title>Analysis of the DNA sequence and duplication history of human chromosome 15.</title>
        <authorList>
            <person name="Zody M.C."/>
            <person name="Garber M."/>
            <person name="Sharpe T."/>
            <person name="Young S.K."/>
            <person name="Rowen L."/>
            <person name="O'Neill K."/>
            <person name="Whittaker C.A."/>
            <person name="Kamal M."/>
            <person name="Chang J.L."/>
            <person name="Cuomo C.A."/>
            <person name="Dewar K."/>
            <person name="FitzGerald M.G."/>
            <person name="Kodira C.D."/>
            <person name="Madan A."/>
            <person name="Qin S."/>
            <person name="Yang X."/>
            <person name="Abbasi N."/>
            <person name="Abouelleil A."/>
            <person name="Arachchi H.M."/>
            <person name="Baradarani L."/>
            <person name="Birditt B."/>
            <person name="Bloom S."/>
            <person name="Bloom T."/>
            <person name="Borowsky M.L."/>
            <person name="Burke J."/>
            <person name="Butler J."/>
            <person name="Cook A."/>
            <person name="DeArellano K."/>
            <person name="DeCaprio D."/>
            <person name="Dorris L. III"/>
            <person name="Dors M."/>
            <person name="Eichler E.E."/>
            <person name="Engels R."/>
            <person name="Fahey J."/>
            <person name="Fleetwood P."/>
            <person name="Friedman C."/>
            <person name="Gearin G."/>
            <person name="Hall J.L."/>
            <person name="Hensley G."/>
            <person name="Johnson E."/>
            <person name="Jones C."/>
            <person name="Kamat A."/>
            <person name="Kaur A."/>
            <person name="Locke D.P."/>
            <person name="Madan A."/>
            <person name="Munson G."/>
            <person name="Jaffe D.B."/>
            <person name="Lui A."/>
            <person name="Macdonald P."/>
            <person name="Mauceli E."/>
            <person name="Naylor J.W."/>
            <person name="Nesbitt R."/>
            <person name="Nicol R."/>
            <person name="O'Leary S.B."/>
            <person name="Ratcliffe A."/>
            <person name="Rounsley S."/>
            <person name="She X."/>
            <person name="Sneddon K.M.B."/>
            <person name="Stewart S."/>
            <person name="Sougnez C."/>
            <person name="Stone S.M."/>
            <person name="Topham K."/>
            <person name="Vincent D."/>
            <person name="Wang S."/>
            <person name="Zimmer A.R."/>
            <person name="Birren B.W."/>
            <person name="Hood L."/>
            <person name="Lander E.S."/>
            <person name="Nusbaum C."/>
        </authorList>
    </citation>
    <scope>NUCLEOTIDE SEQUENCE [LARGE SCALE GENOMIC DNA]</scope>
</reference>
<protein>
    <recommendedName>
        <fullName evidence="4">Putative golgin subfamily A member 8I</fullName>
    </recommendedName>
    <alternativeName>
        <fullName evidence="4">Golgin subfamily A member 8I pseudogene</fullName>
    </alternativeName>
</protein>
<proteinExistence type="uncertain"/>